<feature type="chain" id="PRO_0000409422" description="Tethering factor for nuclear proteasome STS1">
    <location>
        <begin position="1"/>
        <end position="311"/>
    </location>
</feature>
<feature type="region of interest" description="Disordered" evidence="2">
    <location>
        <begin position="1"/>
        <end position="84"/>
    </location>
</feature>
<feature type="region of interest" description="Disordered" evidence="2">
    <location>
        <begin position="277"/>
        <end position="311"/>
    </location>
</feature>
<feature type="compositionally biased region" description="Low complexity" evidence="2">
    <location>
        <begin position="21"/>
        <end position="32"/>
    </location>
</feature>
<feature type="compositionally biased region" description="Basic and acidic residues" evidence="2">
    <location>
        <begin position="38"/>
        <end position="50"/>
    </location>
</feature>
<feature type="compositionally biased region" description="Low complexity" evidence="2">
    <location>
        <begin position="52"/>
        <end position="70"/>
    </location>
</feature>
<feature type="compositionally biased region" description="Polar residues" evidence="2">
    <location>
        <begin position="278"/>
        <end position="287"/>
    </location>
</feature>
<feature type="compositionally biased region" description="Polar residues" evidence="2">
    <location>
        <begin position="296"/>
        <end position="311"/>
    </location>
</feature>
<sequence length="311" mass="34092">MNSLLATPPVPPHFYEHVRLSPSRSMSSANSSGNRKRKAEDDNPSDHDTRMSASPSNSPALAPRPLPTARQIKRPRPNISGRPLPLSRLLETLDTDALRSVLRSMCNRHPELETEVVHTAPRPSVSSALQVLSNYESTLQSSFPLGGNSSSDYAYNRVRQHITNLLDALNDFTPHFLPPNESQVSTALSYLDGATEILHRLPRWDTPQHNLEKDVAYEEIAKAWIVVIREAGKRGGGIQLQYGGWDLKLSKHNQTAGGKLQDAINVLSSSLGWMGGHQDSSASQGGDPSSIRHQLLSGTYGSSSPLKVSKW</sequence>
<gene>
    <name type="primary">STS1</name>
    <name type="ORF">PABG_07561</name>
</gene>
<name>STS1_PARBP</name>
<reference key="1">
    <citation type="journal article" date="2011" name="PLoS Genet.">
        <title>Comparative genomic analysis of human fungal pathogens causing paracoccidioidomycosis.</title>
        <authorList>
            <person name="Desjardins C.A."/>
            <person name="Champion M.D."/>
            <person name="Holder J.W."/>
            <person name="Muszewska A."/>
            <person name="Goldberg J."/>
            <person name="Bailao A.M."/>
            <person name="Brigido M.M."/>
            <person name="Ferreira M.E."/>
            <person name="Garcia A.M."/>
            <person name="Grynberg M."/>
            <person name="Gujja S."/>
            <person name="Heiman D.I."/>
            <person name="Henn M.R."/>
            <person name="Kodira C.D."/>
            <person name="Leon-Narvaez H."/>
            <person name="Longo L.V.G."/>
            <person name="Ma L.-J."/>
            <person name="Malavazi I."/>
            <person name="Matsuo A.L."/>
            <person name="Morais F.V."/>
            <person name="Pereira M."/>
            <person name="Rodriguez-Brito S."/>
            <person name="Sakthikumar S."/>
            <person name="Salem-Izacc S.M."/>
            <person name="Sykes S.M."/>
            <person name="Teixeira M.M."/>
            <person name="Vallejo M.C."/>
            <person name="Walter M.E."/>
            <person name="Yandava C."/>
            <person name="Young S."/>
            <person name="Zeng Q."/>
            <person name="Zucker J."/>
            <person name="Felipe M.S."/>
            <person name="Goldman G.H."/>
            <person name="Haas B.J."/>
            <person name="McEwen J.G."/>
            <person name="Nino-Vega G."/>
            <person name="Puccia R."/>
            <person name="San-Blas G."/>
            <person name="Soares C.M."/>
            <person name="Birren B.W."/>
            <person name="Cuomo C.A."/>
        </authorList>
    </citation>
    <scope>NUCLEOTIDE SEQUENCE [LARGE SCALE GENOMIC DNA]</scope>
    <source>
        <strain>Pb03</strain>
    </source>
</reference>
<proteinExistence type="inferred from homology"/>
<evidence type="ECO:0000250" key="1"/>
<evidence type="ECO:0000256" key="2">
    <source>
        <dbReference type="SAM" id="MobiDB-lite"/>
    </source>
</evidence>
<evidence type="ECO:0000305" key="3"/>
<protein>
    <recommendedName>
        <fullName>Tethering factor for nuclear proteasome STS1</fullName>
    </recommendedName>
</protein>
<organism>
    <name type="scientific">Paracoccidioides brasiliensis (strain Pb03)</name>
    <dbReference type="NCBI Taxonomy" id="482561"/>
    <lineage>
        <taxon>Eukaryota</taxon>
        <taxon>Fungi</taxon>
        <taxon>Dikarya</taxon>
        <taxon>Ascomycota</taxon>
        <taxon>Pezizomycotina</taxon>
        <taxon>Eurotiomycetes</taxon>
        <taxon>Eurotiomycetidae</taxon>
        <taxon>Onygenales</taxon>
        <taxon>Ajellomycetaceae</taxon>
        <taxon>Paracoccidioides</taxon>
    </lineage>
</organism>
<accession>C0SIQ6</accession>
<dbReference type="EMBL" id="KN305550">
    <property type="protein sequence ID" value="EEH18500.1"/>
    <property type="molecule type" value="Genomic_DNA"/>
</dbReference>
<dbReference type="SMR" id="C0SIQ6"/>
<dbReference type="VEuPathDB" id="FungiDB:PABG_07561"/>
<dbReference type="HOGENOM" id="CLU_033658_0_0_1"/>
<dbReference type="OrthoDB" id="12886at33183"/>
<dbReference type="GO" id="GO:0005737">
    <property type="term" value="C:cytoplasm"/>
    <property type="evidence" value="ECO:0007669"/>
    <property type="project" value="UniProtKB-SubCell"/>
</dbReference>
<dbReference type="GO" id="GO:0031965">
    <property type="term" value="C:nuclear membrane"/>
    <property type="evidence" value="ECO:0007669"/>
    <property type="project" value="TreeGrafter"/>
</dbReference>
<dbReference type="GO" id="GO:0070628">
    <property type="term" value="F:proteasome binding"/>
    <property type="evidence" value="ECO:0007669"/>
    <property type="project" value="TreeGrafter"/>
</dbReference>
<dbReference type="GO" id="GO:0071630">
    <property type="term" value="P:nuclear protein quality control by the ubiquitin-proteasome system"/>
    <property type="evidence" value="ECO:0007669"/>
    <property type="project" value="InterPro"/>
</dbReference>
<dbReference type="GO" id="GO:0031144">
    <property type="term" value="P:proteasome localization"/>
    <property type="evidence" value="ECO:0007669"/>
    <property type="project" value="InterPro"/>
</dbReference>
<dbReference type="GO" id="GO:0015031">
    <property type="term" value="P:protein transport"/>
    <property type="evidence" value="ECO:0007669"/>
    <property type="project" value="UniProtKB-KW"/>
</dbReference>
<dbReference type="FunFam" id="1.20.58.1590:FF:000001">
    <property type="entry name" value="Tethering factor for nuclear proteasome STS1"/>
    <property type="match status" value="1"/>
</dbReference>
<dbReference type="Gene3D" id="1.20.58.1590">
    <property type="entry name" value="Tethering factor for nuclear proteasome Cut8/Sts1"/>
    <property type="match status" value="1"/>
</dbReference>
<dbReference type="InterPro" id="IPR013868">
    <property type="entry name" value="Cut8/Sts1_fam"/>
</dbReference>
<dbReference type="InterPro" id="IPR038422">
    <property type="entry name" value="Cut8/Sts1_sf"/>
</dbReference>
<dbReference type="PANTHER" id="PTHR28032">
    <property type="entry name" value="FI02826P"/>
    <property type="match status" value="1"/>
</dbReference>
<dbReference type="PANTHER" id="PTHR28032:SF1">
    <property type="entry name" value="FI02826P"/>
    <property type="match status" value="1"/>
</dbReference>
<dbReference type="Pfam" id="PF08559">
    <property type="entry name" value="Cut8"/>
    <property type="match status" value="1"/>
</dbReference>
<keyword id="KW-0963">Cytoplasm</keyword>
<keyword id="KW-0539">Nucleus</keyword>
<keyword id="KW-0653">Protein transport</keyword>
<keyword id="KW-0813">Transport</keyword>
<comment type="function">
    <text evidence="1">Involved in ubiquitin-mediated protein degradation. Regulatory factor in the ubiquitin/proteasome pathway that controls the turnover of proteasome substrates. Targets proteasomes to the nucleus and facilitates the degradation of nuclear proteins (By similarity).</text>
</comment>
<comment type="subunit">
    <text evidence="1">Binds the proteasome.</text>
</comment>
<comment type="subcellular location">
    <subcellularLocation>
        <location evidence="1">Cytoplasm</location>
    </subcellularLocation>
    <subcellularLocation>
        <location evidence="1">Nucleus</location>
    </subcellularLocation>
</comment>
<comment type="similarity">
    <text evidence="3">Belongs to the cut8/STS1 family.</text>
</comment>